<feature type="initiator methionine" description="Removed" evidence="2 3">
    <location>
        <position position="1"/>
    </location>
</feature>
<feature type="chain" id="PRO_0000131402" description="Large ribosomal subunit protein uL18">
    <location>
        <begin position="2"/>
        <end position="183"/>
    </location>
</feature>
<feature type="sequence conflict" description="In Ref. 2; AA sequence and 3; AA sequence." evidence="4" ref="2 3">
    <original>R</original>
    <variation>L</variation>
    <location>
        <position position="26"/>
    </location>
</feature>
<feature type="sequence conflict" description="In Ref. 2; AA sequence." evidence="4" ref="2">
    <original>LKS</original>
    <variation>KAV</variation>
    <location>
        <begin position="28"/>
        <end position="30"/>
    </location>
</feature>
<keyword id="KW-0903">Direct protein sequencing</keyword>
<keyword id="KW-1185">Reference proteome</keyword>
<keyword id="KW-0687">Ribonucleoprotein</keyword>
<keyword id="KW-0689">Ribosomal protein</keyword>
<keyword id="KW-0694">RNA-binding</keyword>
<keyword id="KW-0699">rRNA-binding</keyword>
<proteinExistence type="evidence at protein level"/>
<dbReference type="EMBL" id="AE004437">
    <property type="protein sequence ID" value="AAG19955.1"/>
    <property type="molecule type" value="Genomic_DNA"/>
</dbReference>
<dbReference type="PIR" id="G84323">
    <property type="entry name" value="G84323"/>
</dbReference>
<dbReference type="PIR" id="S07217">
    <property type="entry name" value="S07217"/>
</dbReference>
<dbReference type="RefSeq" id="WP_010903253.1">
    <property type="nucleotide sequence ID" value="NC_002607.1"/>
</dbReference>
<dbReference type="SMR" id="P50562"/>
<dbReference type="FunCoup" id="P50562">
    <property type="interactions" value="153"/>
</dbReference>
<dbReference type="STRING" id="64091.VNG_1714G"/>
<dbReference type="PaxDb" id="64091-VNG_1714G"/>
<dbReference type="KEGG" id="hal:VNG_1714G"/>
<dbReference type="PATRIC" id="fig|64091.14.peg.1307"/>
<dbReference type="HOGENOM" id="CLU_056222_2_0_2"/>
<dbReference type="InParanoid" id="P50562"/>
<dbReference type="OrthoDB" id="8644at2157"/>
<dbReference type="PhylomeDB" id="P50562"/>
<dbReference type="Proteomes" id="UP000000554">
    <property type="component" value="Chromosome"/>
</dbReference>
<dbReference type="GO" id="GO:0022625">
    <property type="term" value="C:cytosolic large ribosomal subunit"/>
    <property type="evidence" value="ECO:0000318"/>
    <property type="project" value="GO_Central"/>
</dbReference>
<dbReference type="GO" id="GO:0008097">
    <property type="term" value="F:5S rRNA binding"/>
    <property type="evidence" value="ECO:0000318"/>
    <property type="project" value="GO_Central"/>
</dbReference>
<dbReference type="GO" id="GO:0003735">
    <property type="term" value="F:structural constituent of ribosome"/>
    <property type="evidence" value="ECO:0000318"/>
    <property type="project" value="GO_Central"/>
</dbReference>
<dbReference type="GO" id="GO:0000027">
    <property type="term" value="P:ribosomal large subunit assembly"/>
    <property type="evidence" value="ECO:0000318"/>
    <property type="project" value="GO_Central"/>
</dbReference>
<dbReference type="GO" id="GO:0006412">
    <property type="term" value="P:translation"/>
    <property type="evidence" value="ECO:0007669"/>
    <property type="project" value="UniProtKB-UniRule"/>
</dbReference>
<dbReference type="CDD" id="cd00432">
    <property type="entry name" value="Ribosomal_L18_L5e"/>
    <property type="match status" value="1"/>
</dbReference>
<dbReference type="FunFam" id="3.30.420.100:FF:000008">
    <property type="entry name" value="50S ribosomal protein L18"/>
    <property type="match status" value="1"/>
</dbReference>
<dbReference type="Gene3D" id="3.30.420.100">
    <property type="match status" value="1"/>
</dbReference>
<dbReference type="HAMAP" id="MF_01337_A">
    <property type="entry name" value="Ribosomal_uL18_A"/>
    <property type="match status" value="1"/>
</dbReference>
<dbReference type="InterPro" id="IPR005485">
    <property type="entry name" value="Rbsml_uL18_euk"/>
</dbReference>
<dbReference type="NCBIfam" id="NF006342">
    <property type="entry name" value="PRK08569.1"/>
    <property type="match status" value="1"/>
</dbReference>
<dbReference type="PANTHER" id="PTHR23410:SF12">
    <property type="entry name" value="LARGE RIBOSOMAL SUBUNIT PROTEIN UL18"/>
    <property type="match status" value="1"/>
</dbReference>
<dbReference type="PANTHER" id="PTHR23410">
    <property type="entry name" value="RIBOSOMAL PROTEIN L5-RELATED"/>
    <property type="match status" value="1"/>
</dbReference>
<dbReference type="Pfam" id="PF17144">
    <property type="entry name" value="Ribosomal_L5e"/>
    <property type="match status" value="2"/>
</dbReference>
<dbReference type="PRINTS" id="PR00058">
    <property type="entry name" value="RIBOSOMALL5"/>
</dbReference>
<dbReference type="SUPFAM" id="SSF53137">
    <property type="entry name" value="Translational machinery components"/>
    <property type="match status" value="1"/>
</dbReference>
<protein>
    <recommendedName>
        <fullName evidence="4">Large ribosomal subunit protein uL18</fullName>
    </recommendedName>
    <alternativeName>
        <fullName>50S ribosomal protein L18</fullName>
    </alternativeName>
    <alternativeName>
        <fullName>HCuL18</fullName>
    </alternativeName>
    <alternativeName>
        <fullName>HHal18</fullName>
    </alternativeName>
    <alternativeName>
        <fullName>HL13</fullName>
    </alternativeName>
    <alternativeName>
        <fullName>HSal18</fullName>
    </alternativeName>
</protein>
<gene>
    <name type="primary">rpl18</name>
    <name type="ordered locus">VNG_1714G</name>
</gene>
<reference key="1">
    <citation type="journal article" date="2000" name="Proc. Natl. Acad. Sci. U.S.A.">
        <title>Genome sequence of Halobacterium species NRC-1.</title>
        <authorList>
            <person name="Ng W.V."/>
            <person name="Kennedy S.P."/>
            <person name="Mahairas G.G."/>
            <person name="Berquist B."/>
            <person name="Pan M."/>
            <person name="Shukla H.D."/>
            <person name="Lasky S.R."/>
            <person name="Baliga N.S."/>
            <person name="Thorsson V."/>
            <person name="Sbrogna J."/>
            <person name="Swartzell S."/>
            <person name="Weir D."/>
            <person name="Hall J."/>
            <person name="Dahl T.A."/>
            <person name="Welti R."/>
            <person name="Goo Y.A."/>
            <person name="Leithauser B."/>
            <person name="Keller K."/>
            <person name="Cruz R."/>
            <person name="Danson M.J."/>
            <person name="Hough D.W."/>
            <person name="Maddocks D.G."/>
            <person name="Jablonski P.E."/>
            <person name="Krebs M.P."/>
            <person name="Angevine C.M."/>
            <person name="Dale H."/>
            <person name="Isenbarger T.A."/>
            <person name="Peck R.F."/>
            <person name="Pohlschroder M."/>
            <person name="Spudich J.L."/>
            <person name="Jung K.-H."/>
            <person name="Alam M."/>
            <person name="Freitas T."/>
            <person name="Hou S."/>
            <person name="Daniels C.J."/>
            <person name="Dennis P.P."/>
            <person name="Omer A.D."/>
            <person name="Ebhardt H."/>
            <person name="Lowe T.M."/>
            <person name="Liang P."/>
            <person name="Riley M."/>
            <person name="Hood L."/>
            <person name="DasSarma S."/>
        </authorList>
    </citation>
    <scope>NUCLEOTIDE SEQUENCE [LARGE SCALE GENOMIC DNA]</scope>
    <source>
        <strain>ATCC 700922 / JCM 11081 / NRC-1</strain>
    </source>
</reference>
<reference key="2">
    <citation type="journal article" date="1978" name="Eur. J. Biochem.">
        <title>The 5-S RNA-protein complex from an extreme halophile, Halobacterium cutirubrum. Purification and characterization.</title>
        <authorList>
            <person name="Smith N."/>
            <person name="Matheson A.T."/>
            <person name="Yaguchi M."/>
            <person name="Willick G."/>
            <person name="Nazar R.N."/>
        </authorList>
    </citation>
    <scope>PROTEIN SEQUENCE OF 2-31</scope>
</reference>
<reference key="3">
    <citation type="journal article" date="1994" name="Eur. J. Biochem.">
        <title>Comparative analysis of the protein components from 5S rRNA.protein complexes of halophilic archaebacteria.</title>
        <authorList>
            <person name="McDougall J."/>
            <person name="Wittmann-Liebold B."/>
        </authorList>
    </citation>
    <scope>PROTEIN SEQUENCE OF 2-27</scope>
    <source>
        <strain>ATCC 33171 / DSM 3754 / JCM 8978 / NCIMB 764 / NRC 34002</strain>
        <strain>DSM 670</strain>
    </source>
</reference>
<comment type="function">
    <text evidence="1">This is one of the proteins that bind and probably mediate the attachment of the 5S RNA into the large ribosomal subunit, where it forms part of the central protuberance.</text>
</comment>
<comment type="subunit">
    <text evidence="1">Part of the 50S ribosomal subunit. Contacts the 5S and 23S rRNAs (By similarity).</text>
</comment>
<comment type="similarity">
    <text evidence="4">Belongs to the universal ribosomal protein uL18 family.</text>
</comment>
<sequence length="183" mass="19811">MATGPRYKVPMRRRREVRTDYHQRLRLLKSGKPRLVARKSNKHVTAQLVTTGPDGDETVASAHSSDLDAYGWAAPTGNLPAAYLTGLLAGQRAVDAGVEEAVLDIGLNTATPGSKVFAIQEGAIDAGLDVPHNDSVLADWSRTRGEHIAEYAESLDEPLYSGDFDATALPAHFDETREAIMED</sequence>
<name>RL18_HALSA</name>
<accession>P50562</accession>
<accession>P05970</accession>
<accession>P50560</accession>
<accession>Q9HPB5</accession>
<evidence type="ECO:0000250" key="1"/>
<evidence type="ECO:0000269" key="2">
    <source>
    </source>
</evidence>
<evidence type="ECO:0000269" key="3">
    <source>
    </source>
</evidence>
<evidence type="ECO:0000305" key="4"/>
<organism>
    <name type="scientific">Halobacterium salinarum (strain ATCC 700922 / JCM 11081 / NRC-1)</name>
    <name type="common">Halobacterium halobium</name>
    <dbReference type="NCBI Taxonomy" id="64091"/>
    <lineage>
        <taxon>Archaea</taxon>
        <taxon>Methanobacteriati</taxon>
        <taxon>Methanobacteriota</taxon>
        <taxon>Stenosarchaea group</taxon>
        <taxon>Halobacteria</taxon>
        <taxon>Halobacteriales</taxon>
        <taxon>Halobacteriaceae</taxon>
        <taxon>Halobacterium</taxon>
        <taxon>Halobacterium salinarum NRC-34001</taxon>
    </lineage>
</organism>